<proteinExistence type="evidence at protein level"/>
<gene>
    <name type="primary">Sec31a</name>
    <name type="synonym">Sec31l1</name>
</gene>
<sequence length="1230" mass="133569">MKLKEIDRTAMQAWSPAQNHPIYLATGTSAQQLDATFSTNASLEIFELDLSDPSLDMKSCATFSSSHRYHKLIWGPHKMDSKGDVSGVLIAGGENGNIILYDPSKIIAGDKEVVIAQKDKHTGPVRALDVNIFQTNLVASGANESEIYIWDLNNFATPMTPGAKTQPPEDISCIAWNRQVQHILASASPSGRATVWDLRKNEPIIKVSDHSNRMHCSGLAWHPDVATQMVLASEDDRLPVIQMWDLRFASSPLRVLENHARGILAVAWSMADPELLLSCGKDAKILCSNPNTGEVLYELPTNTQWCFDIQWCPRNPAVLSAASFDGRISVYSIMGGSIDGLRQKQVDKLSSSFGNLDPFGTGQPLPPLQIPQQSAQHSIVLPLKKPPKWIRRPVGASFSFGGKLVTFESVAVPLQQGAEQQRRQPVFISQVVTEKDFLNRSAQLQHAVQSQGFIGYCQKKIEASQTEFEKNVWSFLKVNFEEDSRGKYLELLGYRKEDLGQKIALALNKVDGPDVALKDSDQVAQSDGEESPAAEEQLLGERIKEEKQECDFLPSAGGTFNISVSGDIDGLITRALLTGNFESAVDLCLHDNRMADAIILAIAGGQELLAQTQKKYFAKSQSKITRLITAVVMKNWREIVESCDLKNWREALAAVLTYAKPDEFSALCDLLGTRLEREGDSLLRTQACLCYICAGNVERLVACWTKAQDGSSPLSLQDLIEKVVILRKAVQLTQALDTNTVGALLAEKMSQYASLLAAQGSIAAALAFLPDNTNQPNIVQLRDRLCKAQGKPVSGQESSQSPYERQPLSKGRPGPVAGHSQMPRVQTQQYYPHGENPPPPGFIMQGNVIPNPAAPLPTAPGHMPSQLPPYPQPQPYQPAQQYSFGTGGAAAYRPQQPVAPPASNAYPNTPYISPVASYSGQPQMYTAQQASSPTSSSAASFPPPSSGASFQHGGPGAPPSSSAYALPPGTTGTPPAASELPASQRTENQSFQDQASILEGPQNGWNDPPALNRVPKKKKMPENFMPPVPITSPIMNPSGDPQSQGLQQQPSTPGPLSSHASFPQQHLAGGQPFHGVQQPLAQTGMPPSFSKPNTEGAPGAPIGNTIQHVQALPTEKITKKPIPEEHLILKTTFEDLIQRCLSSATDPQTKRKLDDASKRLEFLYDKLREQTLSPTIINGLHSIARSIETRNYSEGLSVHTHIVSTSNFSETSAFMPVLKVVLSQASKLGV</sequence>
<name>SC31A_MOUSE</name>
<protein>
    <recommendedName>
        <fullName>Protein transport protein Sec31A</fullName>
    </recommendedName>
    <alternativeName>
        <fullName>SEC31-like protein 1</fullName>
    </alternativeName>
    <alternativeName>
        <fullName>SEC31-related protein A</fullName>
    </alternativeName>
</protein>
<evidence type="ECO:0000250" key="1"/>
<evidence type="ECO:0000250" key="2">
    <source>
        <dbReference type="UniProtKB" id="O94979"/>
    </source>
</evidence>
<evidence type="ECO:0000250" key="3">
    <source>
        <dbReference type="UniProtKB" id="Q9Z2Q1"/>
    </source>
</evidence>
<evidence type="ECO:0000255" key="4">
    <source>
        <dbReference type="PROSITE-ProRule" id="PRU00221"/>
    </source>
</evidence>
<evidence type="ECO:0000256" key="5">
    <source>
        <dbReference type="SAM" id="MobiDB-lite"/>
    </source>
</evidence>
<evidence type="ECO:0000269" key="6">
    <source>
    </source>
</evidence>
<evidence type="ECO:0000303" key="7">
    <source>
    </source>
</evidence>
<evidence type="ECO:0000305" key="8"/>
<evidence type="ECO:0007744" key="9">
    <source>
    </source>
</evidence>
<evidence type="ECO:0007744" key="10">
    <source>
    </source>
</evidence>
<evidence type="ECO:0007744" key="11">
    <source>
    </source>
</evidence>
<evidence type="ECO:0007744" key="12">
    <source>
    </source>
</evidence>
<evidence type="ECO:0007744" key="13">
    <source>
    </source>
</evidence>
<reference key="1">
    <citation type="journal article" date="2004" name="Genome Res.">
        <title>The status, quality, and expansion of the NIH full-length cDNA project: the Mammalian Gene Collection (MGC).</title>
        <authorList>
            <consortium name="The MGC Project Team"/>
        </authorList>
    </citation>
    <scope>NUCLEOTIDE SEQUENCE [LARGE SCALE MRNA] (ISOFORM 3)</scope>
    <scope>NUCLEOTIDE SEQUENCE [LARGE SCALE MRNA] OF 286-1230 (ISOFORM 2)</scope>
    <source>
        <strain>FVB/N</strain>
        <tissue>Salivary gland</tissue>
    </source>
</reference>
<reference key="2">
    <citation type="journal article" date="2005" name="Science">
        <title>The transcriptional landscape of the mammalian genome.</title>
        <authorList>
            <person name="Carninci P."/>
            <person name="Kasukawa T."/>
            <person name="Katayama S."/>
            <person name="Gough J."/>
            <person name="Frith M.C."/>
            <person name="Maeda N."/>
            <person name="Oyama R."/>
            <person name="Ravasi T."/>
            <person name="Lenhard B."/>
            <person name="Wells C."/>
            <person name="Kodzius R."/>
            <person name="Shimokawa K."/>
            <person name="Bajic V.B."/>
            <person name="Brenner S.E."/>
            <person name="Batalov S."/>
            <person name="Forrest A.R."/>
            <person name="Zavolan M."/>
            <person name="Davis M.J."/>
            <person name="Wilming L.G."/>
            <person name="Aidinis V."/>
            <person name="Allen J.E."/>
            <person name="Ambesi-Impiombato A."/>
            <person name="Apweiler R."/>
            <person name="Aturaliya R.N."/>
            <person name="Bailey T.L."/>
            <person name="Bansal M."/>
            <person name="Baxter L."/>
            <person name="Beisel K.W."/>
            <person name="Bersano T."/>
            <person name="Bono H."/>
            <person name="Chalk A.M."/>
            <person name="Chiu K.P."/>
            <person name="Choudhary V."/>
            <person name="Christoffels A."/>
            <person name="Clutterbuck D.R."/>
            <person name="Crowe M.L."/>
            <person name="Dalla E."/>
            <person name="Dalrymple B.P."/>
            <person name="de Bono B."/>
            <person name="Della Gatta G."/>
            <person name="di Bernardo D."/>
            <person name="Down T."/>
            <person name="Engstrom P."/>
            <person name="Fagiolini M."/>
            <person name="Faulkner G."/>
            <person name="Fletcher C.F."/>
            <person name="Fukushima T."/>
            <person name="Furuno M."/>
            <person name="Futaki S."/>
            <person name="Gariboldi M."/>
            <person name="Georgii-Hemming P."/>
            <person name="Gingeras T.R."/>
            <person name="Gojobori T."/>
            <person name="Green R.E."/>
            <person name="Gustincich S."/>
            <person name="Harbers M."/>
            <person name="Hayashi Y."/>
            <person name="Hensch T.K."/>
            <person name="Hirokawa N."/>
            <person name="Hill D."/>
            <person name="Huminiecki L."/>
            <person name="Iacono M."/>
            <person name="Ikeo K."/>
            <person name="Iwama A."/>
            <person name="Ishikawa T."/>
            <person name="Jakt M."/>
            <person name="Kanapin A."/>
            <person name="Katoh M."/>
            <person name="Kawasawa Y."/>
            <person name="Kelso J."/>
            <person name="Kitamura H."/>
            <person name="Kitano H."/>
            <person name="Kollias G."/>
            <person name="Krishnan S.P."/>
            <person name="Kruger A."/>
            <person name="Kummerfeld S.K."/>
            <person name="Kurochkin I.V."/>
            <person name="Lareau L.F."/>
            <person name="Lazarevic D."/>
            <person name="Lipovich L."/>
            <person name="Liu J."/>
            <person name="Liuni S."/>
            <person name="McWilliam S."/>
            <person name="Madan Babu M."/>
            <person name="Madera M."/>
            <person name="Marchionni L."/>
            <person name="Matsuda H."/>
            <person name="Matsuzawa S."/>
            <person name="Miki H."/>
            <person name="Mignone F."/>
            <person name="Miyake S."/>
            <person name="Morris K."/>
            <person name="Mottagui-Tabar S."/>
            <person name="Mulder N."/>
            <person name="Nakano N."/>
            <person name="Nakauchi H."/>
            <person name="Ng P."/>
            <person name="Nilsson R."/>
            <person name="Nishiguchi S."/>
            <person name="Nishikawa S."/>
            <person name="Nori F."/>
            <person name="Ohara O."/>
            <person name="Okazaki Y."/>
            <person name="Orlando V."/>
            <person name="Pang K.C."/>
            <person name="Pavan W.J."/>
            <person name="Pavesi G."/>
            <person name="Pesole G."/>
            <person name="Petrovsky N."/>
            <person name="Piazza S."/>
            <person name="Reed J."/>
            <person name="Reid J.F."/>
            <person name="Ring B.Z."/>
            <person name="Ringwald M."/>
            <person name="Rost B."/>
            <person name="Ruan Y."/>
            <person name="Salzberg S.L."/>
            <person name="Sandelin A."/>
            <person name="Schneider C."/>
            <person name="Schoenbach C."/>
            <person name="Sekiguchi K."/>
            <person name="Semple C.A."/>
            <person name="Seno S."/>
            <person name="Sessa L."/>
            <person name="Sheng Y."/>
            <person name="Shibata Y."/>
            <person name="Shimada H."/>
            <person name="Shimada K."/>
            <person name="Silva D."/>
            <person name="Sinclair B."/>
            <person name="Sperling S."/>
            <person name="Stupka E."/>
            <person name="Sugiura K."/>
            <person name="Sultana R."/>
            <person name="Takenaka Y."/>
            <person name="Taki K."/>
            <person name="Tammoja K."/>
            <person name="Tan S.L."/>
            <person name="Tang S."/>
            <person name="Taylor M.S."/>
            <person name="Tegner J."/>
            <person name="Teichmann S.A."/>
            <person name="Ueda H.R."/>
            <person name="van Nimwegen E."/>
            <person name="Verardo R."/>
            <person name="Wei C.L."/>
            <person name="Yagi K."/>
            <person name="Yamanishi H."/>
            <person name="Zabarovsky E."/>
            <person name="Zhu S."/>
            <person name="Zimmer A."/>
            <person name="Hide W."/>
            <person name="Bult C."/>
            <person name="Grimmond S.M."/>
            <person name="Teasdale R.D."/>
            <person name="Liu E.T."/>
            <person name="Brusic V."/>
            <person name="Quackenbush J."/>
            <person name="Wahlestedt C."/>
            <person name="Mattick J.S."/>
            <person name="Hume D.A."/>
            <person name="Kai C."/>
            <person name="Sasaki D."/>
            <person name="Tomaru Y."/>
            <person name="Fukuda S."/>
            <person name="Kanamori-Katayama M."/>
            <person name="Suzuki M."/>
            <person name="Aoki J."/>
            <person name="Arakawa T."/>
            <person name="Iida J."/>
            <person name="Imamura K."/>
            <person name="Itoh M."/>
            <person name="Kato T."/>
            <person name="Kawaji H."/>
            <person name="Kawagashira N."/>
            <person name="Kawashima T."/>
            <person name="Kojima M."/>
            <person name="Kondo S."/>
            <person name="Konno H."/>
            <person name="Nakano K."/>
            <person name="Ninomiya N."/>
            <person name="Nishio T."/>
            <person name="Okada M."/>
            <person name="Plessy C."/>
            <person name="Shibata K."/>
            <person name="Shiraki T."/>
            <person name="Suzuki S."/>
            <person name="Tagami M."/>
            <person name="Waki K."/>
            <person name="Watahiki A."/>
            <person name="Okamura-Oho Y."/>
            <person name="Suzuki H."/>
            <person name="Kawai J."/>
            <person name="Hayashizaki Y."/>
        </authorList>
    </citation>
    <scope>NUCLEOTIDE SEQUENCE [LARGE SCALE MRNA] OF 1-612 (ISOFORM 1)</scope>
    <source>
        <strain>C57BL/6J</strain>
        <tissue>Medulla oblongata</tissue>
        <tissue>Olfactory bulb</tissue>
    </source>
</reference>
<reference key="3">
    <citation type="journal article" date="2007" name="Proc. Natl. Acad. Sci. U.S.A.">
        <title>Large-scale phosphorylation analysis of mouse liver.</title>
        <authorList>
            <person name="Villen J."/>
            <person name="Beausoleil S.A."/>
            <person name="Gerber S.A."/>
            <person name="Gygi S.P."/>
        </authorList>
    </citation>
    <scope>PHOSPHORYLATION [LARGE SCALE ANALYSIS] AT SER-526</scope>
    <scope>IDENTIFICATION BY MASS SPECTROMETRY [LARGE SCALE ANALYSIS]</scope>
    <source>
        <tissue>Liver</tissue>
    </source>
</reference>
<reference key="4">
    <citation type="journal article" date="2008" name="J. Proteome Res.">
        <title>Specific phosphopeptide enrichment with immobilized titanium ion affinity chromatography adsorbent for phosphoproteome analysis.</title>
        <authorList>
            <person name="Zhou H."/>
            <person name="Ye M."/>
            <person name="Dong J."/>
            <person name="Han G."/>
            <person name="Jiang X."/>
            <person name="Wu R."/>
            <person name="Zou H."/>
        </authorList>
    </citation>
    <scope>PHOSPHORYLATION [LARGE SCALE ANALYSIS] AT SER-526 AND SER-531</scope>
    <scope>IDENTIFICATION BY MASS SPECTROMETRY [LARGE SCALE ANALYSIS]</scope>
    <source>
        <tissue>Liver</tissue>
    </source>
</reference>
<reference key="5">
    <citation type="journal article" date="2009" name="Mol. Cell. Proteomics">
        <title>Large scale localization of protein phosphorylation by use of electron capture dissociation mass spectrometry.</title>
        <authorList>
            <person name="Sweet S.M."/>
            <person name="Bailey C.M."/>
            <person name="Cunningham D.L."/>
            <person name="Heath J.K."/>
            <person name="Cooper H.J."/>
        </authorList>
    </citation>
    <scope>PHOSPHORYLATION [LARGE SCALE ANALYSIS] AT SER-526</scope>
    <scope>IDENTIFICATION BY MASS SPECTROMETRY [LARGE SCALE ANALYSIS]</scope>
    <source>
        <tissue>Embryonic fibroblast</tissue>
    </source>
</reference>
<reference key="6">
    <citation type="journal article" date="2010" name="Cell">
        <title>A tissue-specific atlas of mouse protein phosphorylation and expression.</title>
        <authorList>
            <person name="Huttlin E.L."/>
            <person name="Jedrychowski M.P."/>
            <person name="Elias J.E."/>
            <person name="Goswami T."/>
            <person name="Rad R."/>
            <person name="Beausoleil S.A."/>
            <person name="Villen J."/>
            <person name="Haas W."/>
            <person name="Sowa M.E."/>
            <person name="Gygi S.P."/>
        </authorList>
    </citation>
    <scope>PHOSPHORYLATION [LARGE SCALE ANALYSIS] AT SER-526 AND SER-531</scope>
    <scope>IDENTIFICATION BY MASS SPECTROMETRY [LARGE SCALE ANALYSIS]</scope>
    <source>
        <tissue>Brain</tissue>
        <tissue>Brown adipose tissue</tissue>
        <tissue>Heart</tissue>
        <tissue>Kidney</tissue>
        <tissue>Liver</tissue>
        <tissue>Lung</tissue>
        <tissue>Pancreas</tissue>
        <tissue>Spleen</tissue>
        <tissue>Testis</tissue>
    </source>
</reference>
<reference key="7">
    <citation type="journal article" date="2014" name="EMBO J.">
        <title>Leucine-rich repeat kinase 2 regulates Sec16A at ER exit sites to allow ER-Golgi export.</title>
        <authorList>
            <person name="Cho H.J."/>
            <person name="Yu J."/>
            <person name="Xie C."/>
            <person name="Rudrabhatla P."/>
            <person name="Chen X."/>
            <person name="Wu J."/>
            <person name="Parisiadou L."/>
            <person name="Liu G."/>
            <person name="Sun L."/>
            <person name="Ma B."/>
            <person name="Ding J."/>
            <person name="Liu Z."/>
            <person name="Cai H."/>
        </authorList>
    </citation>
    <scope>SUBCELLULAR LOCATION</scope>
</reference>
<reference key="8">
    <citation type="journal article" date="2014" name="Mol. Cell. Proteomics">
        <title>Immunoaffinity enrichment and mass spectrometry analysis of protein methylation.</title>
        <authorList>
            <person name="Guo A."/>
            <person name="Gu H."/>
            <person name="Zhou J."/>
            <person name="Mulhern D."/>
            <person name="Wang Y."/>
            <person name="Lee K.A."/>
            <person name="Yang V."/>
            <person name="Aguiar M."/>
            <person name="Kornhauser J."/>
            <person name="Jia X."/>
            <person name="Ren J."/>
            <person name="Beausoleil S.A."/>
            <person name="Silva J.C."/>
            <person name="Vemulapalli V."/>
            <person name="Bedford M.T."/>
            <person name="Comb M.J."/>
        </authorList>
    </citation>
    <scope>METHYLATION [LARGE SCALE ANALYSIS] AT ARG-423</scope>
    <scope>IDENTIFICATION BY MASS SPECTROMETRY [LARGE SCALE ANALYSIS]</scope>
    <source>
        <tissue>Brain</tissue>
        <tissue>Embryo</tissue>
    </source>
</reference>
<accession>Q3UPL0</accession>
<accession>Q3UYH3</accession>
<accession>Q6IQZ3</accession>
<accession>Q7TQJ7</accession>
<accession>Q811J4</accession>
<organism>
    <name type="scientific">Mus musculus</name>
    <name type="common">Mouse</name>
    <dbReference type="NCBI Taxonomy" id="10090"/>
    <lineage>
        <taxon>Eukaryota</taxon>
        <taxon>Metazoa</taxon>
        <taxon>Chordata</taxon>
        <taxon>Craniata</taxon>
        <taxon>Vertebrata</taxon>
        <taxon>Euteleostomi</taxon>
        <taxon>Mammalia</taxon>
        <taxon>Eutheria</taxon>
        <taxon>Euarchontoglires</taxon>
        <taxon>Glires</taxon>
        <taxon>Rodentia</taxon>
        <taxon>Myomorpha</taxon>
        <taxon>Muroidea</taxon>
        <taxon>Muridae</taxon>
        <taxon>Murinae</taxon>
        <taxon>Mus</taxon>
        <taxon>Mus</taxon>
    </lineage>
</organism>
<keyword id="KW-0025">Alternative splicing</keyword>
<keyword id="KW-0963">Cytoplasm</keyword>
<keyword id="KW-0968">Cytoplasmic vesicle</keyword>
<keyword id="KW-0256">Endoplasmic reticulum</keyword>
<keyword id="KW-0931">ER-Golgi transport</keyword>
<keyword id="KW-1017">Isopeptide bond</keyword>
<keyword id="KW-0472">Membrane</keyword>
<keyword id="KW-0488">Methylation</keyword>
<keyword id="KW-0597">Phosphoprotein</keyword>
<keyword id="KW-0653">Protein transport</keyword>
<keyword id="KW-1185">Reference proteome</keyword>
<keyword id="KW-0677">Repeat</keyword>
<keyword id="KW-0813">Transport</keyword>
<keyword id="KW-0832">Ubl conjugation</keyword>
<keyword id="KW-0853">WD repeat</keyword>
<feature type="chain" id="PRO_0000295148" description="Protein transport protein Sec31A">
    <location>
        <begin position="1"/>
        <end position="1230"/>
    </location>
</feature>
<feature type="repeat" description="WD 1">
    <location>
        <begin position="4"/>
        <end position="47"/>
    </location>
</feature>
<feature type="repeat" description="WD 2">
    <location>
        <begin position="64"/>
        <end position="111"/>
    </location>
</feature>
<feature type="repeat" description="WD 3">
    <location>
        <begin position="120"/>
        <end position="160"/>
    </location>
</feature>
<feature type="repeat" description="WD 4">
    <location>
        <begin position="166"/>
        <end position="206"/>
    </location>
</feature>
<feature type="repeat" description="WD 5">
    <location>
        <begin position="209"/>
        <end position="254"/>
    </location>
</feature>
<feature type="repeat" description="WD 6">
    <location>
        <begin position="258"/>
        <end position="298"/>
    </location>
</feature>
<feature type="repeat" description="WD 7">
    <location>
        <begin position="301"/>
        <end position="342"/>
    </location>
</feature>
<feature type="repeat" description="WD 8; interaction with SEC13" evidence="4">
    <location>
        <begin position="397"/>
        <end position="429"/>
    </location>
</feature>
<feature type="region of interest" description="Interaction with SEC13" evidence="2">
    <location>
        <begin position="161"/>
        <end position="470"/>
    </location>
</feature>
<feature type="region of interest" description="Disordered" evidence="5">
    <location>
        <begin position="789"/>
        <end position="905"/>
    </location>
</feature>
<feature type="region of interest" description="Interaction with PDCD6" evidence="2">
    <location>
        <begin position="799"/>
        <end position="1123"/>
    </location>
</feature>
<feature type="region of interest" description="Disordered" evidence="5">
    <location>
        <begin position="924"/>
        <end position="1104"/>
    </location>
</feature>
<feature type="short sequence motif" description="ALG-2-binding site motif-2 (ABS-2)," evidence="2">
    <location>
        <begin position="841"/>
        <end position="847"/>
    </location>
</feature>
<feature type="compositionally biased region" description="Pro residues" evidence="5">
    <location>
        <begin position="866"/>
        <end position="876"/>
    </location>
</feature>
<feature type="compositionally biased region" description="Low complexity" evidence="5">
    <location>
        <begin position="930"/>
        <end position="940"/>
    </location>
</feature>
<feature type="compositionally biased region" description="Low complexity" evidence="5">
    <location>
        <begin position="959"/>
        <end position="975"/>
    </location>
</feature>
<feature type="compositionally biased region" description="Polar residues" evidence="5">
    <location>
        <begin position="981"/>
        <end position="995"/>
    </location>
</feature>
<feature type="compositionally biased region" description="Polar residues" evidence="5">
    <location>
        <begin position="1033"/>
        <end position="1064"/>
    </location>
</feature>
<feature type="modified residue" description="Asymmetric dimethylarginine" evidence="13">
    <location>
        <position position="423"/>
    </location>
</feature>
<feature type="modified residue" description="Phosphoserine" evidence="9 10 11 12">
    <location>
        <position position="526"/>
    </location>
</feature>
<feature type="modified residue" description="Phosphoserine" evidence="10 12">
    <location>
        <position position="531"/>
    </location>
</feature>
<feature type="modified residue" description="Phosphoserine" evidence="2">
    <location>
        <position position="798"/>
    </location>
</feature>
<feature type="modified residue" description="Phosphothreonine" evidence="2">
    <location>
        <position position="1171"/>
    </location>
</feature>
<feature type="modified residue" description="Phosphoserine" evidence="2">
    <location>
        <position position="1173"/>
    </location>
</feature>
<feature type="cross-link" description="Glycyl lysine isopeptide (Lys-Gly) (interchain with G-Cter in ubiquitin)" evidence="2">
    <location>
        <position position="646"/>
    </location>
</feature>
<feature type="cross-link" description="Glycyl lysine isopeptide (Lys-Gly) (interchain with G-Cter in ubiquitin)" evidence="2">
    <location>
        <position position="1227"/>
    </location>
</feature>
<feature type="splice variant" id="VSP_026752" description="In isoform 3." evidence="7">
    <location>
        <begin position="1"/>
        <end position="923"/>
    </location>
</feature>
<feature type="splice variant" id="VSP_026753" description="In isoform 2." evidence="7">
    <location>
        <begin position="503"/>
        <end position="541"/>
    </location>
</feature>
<feature type="sequence conflict" description="In Ref. 1; AAH54358." evidence="8" ref="1">
    <original>S</original>
    <variation>P</variation>
    <location>
        <position position="820"/>
    </location>
</feature>
<dbReference type="EMBL" id="BC043942">
    <property type="protein sequence ID" value="AAH43942.1"/>
    <property type="molecule type" value="mRNA"/>
</dbReference>
<dbReference type="EMBL" id="BC054358">
    <property type="protein sequence ID" value="AAH54358.1"/>
    <property type="molecule type" value="mRNA"/>
</dbReference>
<dbReference type="EMBL" id="BC071249">
    <property type="protein sequence ID" value="AAH71249.1"/>
    <property type="molecule type" value="mRNA"/>
</dbReference>
<dbReference type="EMBL" id="AK134681">
    <property type="protein sequence ID" value="BAE22239.1"/>
    <property type="molecule type" value="mRNA"/>
</dbReference>
<dbReference type="EMBL" id="AK143455">
    <property type="protein sequence ID" value="BAE25385.1"/>
    <property type="molecule type" value="mRNA"/>
</dbReference>
<dbReference type="CCDS" id="CCDS51573.1">
    <molecule id="Q3UPL0-1"/>
</dbReference>
<dbReference type="RefSeq" id="NP_081245.1">
    <molecule id="Q3UPL0-1"/>
    <property type="nucleotide sequence ID" value="NM_026969.2"/>
</dbReference>
<dbReference type="RefSeq" id="XP_011247860.1">
    <molecule id="Q3UPL0-2"/>
    <property type="nucleotide sequence ID" value="XM_011249558.3"/>
</dbReference>
<dbReference type="SMR" id="Q3UPL0"/>
<dbReference type="BioGRID" id="213263">
    <property type="interactions" value="21"/>
</dbReference>
<dbReference type="FunCoup" id="Q3UPL0">
    <property type="interactions" value="4371"/>
</dbReference>
<dbReference type="IntAct" id="Q3UPL0">
    <property type="interactions" value="3"/>
</dbReference>
<dbReference type="MINT" id="Q3UPL0"/>
<dbReference type="STRING" id="10090.ENSMUSP00000092157"/>
<dbReference type="ChEMBL" id="CHEMBL4879465"/>
<dbReference type="GlyGen" id="Q3UPL0">
    <property type="glycosylation" value="3 sites, 1 O-linked glycan (2 sites)"/>
</dbReference>
<dbReference type="iPTMnet" id="Q3UPL0"/>
<dbReference type="PhosphoSitePlus" id="Q3UPL0"/>
<dbReference type="SwissPalm" id="Q3UPL0"/>
<dbReference type="jPOST" id="Q3UPL0"/>
<dbReference type="PaxDb" id="10090-ENSMUSP00000092157"/>
<dbReference type="PeptideAtlas" id="Q3UPL0"/>
<dbReference type="ProteomicsDB" id="256601">
    <molecule id="Q3UPL0-1"/>
</dbReference>
<dbReference type="ProteomicsDB" id="256602">
    <molecule id="Q3UPL0-2"/>
</dbReference>
<dbReference type="ProteomicsDB" id="256603">
    <molecule id="Q3UPL0-3"/>
</dbReference>
<dbReference type="Pumba" id="Q3UPL0"/>
<dbReference type="Antibodypedia" id="1692">
    <property type="antibodies" value="143 antibodies from 24 providers"/>
</dbReference>
<dbReference type="Ensembl" id="ENSMUST00000094578.11">
    <molecule id="Q3UPL0-1"/>
    <property type="protein sequence ID" value="ENSMUSP00000092157.4"/>
    <property type="gene ID" value="ENSMUSG00000035325.17"/>
</dbReference>
<dbReference type="Ensembl" id="ENSMUST00000182886.8">
    <molecule id="Q3UPL0-2"/>
    <property type="protein sequence ID" value="ENSMUSP00000138213.2"/>
    <property type="gene ID" value="ENSMUSG00000035325.17"/>
</dbReference>
<dbReference type="GeneID" id="69162"/>
<dbReference type="KEGG" id="mmu:69162"/>
<dbReference type="UCSC" id="uc008yhi.1">
    <molecule id="Q3UPL0-2"/>
    <property type="organism name" value="mouse"/>
</dbReference>
<dbReference type="UCSC" id="uc008yhk.2">
    <molecule id="Q3UPL0-1"/>
    <property type="organism name" value="mouse"/>
</dbReference>
<dbReference type="AGR" id="MGI:1916412"/>
<dbReference type="CTD" id="22872"/>
<dbReference type="MGI" id="MGI:1916412">
    <property type="gene designation" value="Sec31a"/>
</dbReference>
<dbReference type="VEuPathDB" id="HostDB:ENSMUSG00000035325"/>
<dbReference type="eggNOG" id="KOG0307">
    <property type="taxonomic scope" value="Eukaryota"/>
</dbReference>
<dbReference type="GeneTree" id="ENSGT00390000003175"/>
<dbReference type="HOGENOM" id="CLU_003033_1_0_1"/>
<dbReference type="InParanoid" id="Q3UPL0"/>
<dbReference type="OMA" id="WLERPCG"/>
<dbReference type="OrthoDB" id="542917at2759"/>
<dbReference type="PhylomeDB" id="Q3UPL0"/>
<dbReference type="TreeFam" id="TF313842"/>
<dbReference type="Reactome" id="R-MMU-204005">
    <property type="pathway name" value="COPII-mediated vesicle transport"/>
</dbReference>
<dbReference type="Reactome" id="R-MMU-2132295">
    <property type="pathway name" value="MHC class II antigen presentation"/>
</dbReference>
<dbReference type="Reactome" id="R-MMU-983170">
    <property type="pathway name" value="Antigen Presentation: Folding, assembly and peptide loading of class I MHC"/>
</dbReference>
<dbReference type="BioGRID-ORCS" id="69162">
    <property type="hits" value="12 hits in 80 CRISPR screens"/>
</dbReference>
<dbReference type="ChiTaRS" id="Sec31a">
    <property type="organism name" value="mouse"/>
</dbReference>
<dbReference type="PRO" id="PR:Q3UPL0"/>
<dbReference type="Proteomes" id="UP000000589">
    <property type="component" value="Chromosome 5"/>
</dbReference>
<dbReference type="RNAct" id="Q3UPL0">
    <property type="molecule type" value="protein"/>
</dbReference>
<dbReference type="Bgee" id="ENSMUSG00000035325">
    <property type="expression patterns" value="Expressed in vault of skull and 262 other cell types or tissues"/>
</dbReference>
<dbReference type="ExpressionAtlas" id="Q3UPL0">
    <property type="expression patterns" value="baseline and differential"/>
</dbReference>
<dbReference type="GO" id="GO:0030127">
    <property type="term" value="C:COPII vesicle coat"/>
    <property type="evidence" value="ECO:0000250"/>
    <property type="project" value="UniProtKB"/>
</dbReference>
<dbReference type="GO" id="GO:0030134">
    <property type="term" value="C:COPII-coated ER to Golgi transport vesicle"/>
    <property type="evidence" value="ECO:0000314"/>
    <property type="project" value="MGI"/>
</dbReference>
<dbReference type="GO" id="GO:0005829">
    <property type="term" value="C:cytosol"/>
    <property type="evidence" value="ECO:0007669"/>
    <property type="project" value="Ensembl"/>
</dbReference>
<dbReference type="GO" id="GO:0070971">
    <property type="term" value="C:endoplasmic reticulum exit site"/>
    <property type="evidence" value="ECO:0000314"/>
    <property type="project" value="UniProtKB"/>
</dbReference>
<dbReference type="GO" id="GO:0005789">
    <property type="term" value="C:endoplasmic reticulum membrane"/>
    <property type="evidence" value="ECO:0007669"/>
    <property type="project" value="UniProtKB-SubCell"/>
</dbReference>
<dbReference type="GO" id="GO:0048471">
    <property type="term" value="C:perinuclear region of cytoplasm"/>
    <property type="evidence" value="ECO:0007669"/>
    <property type="project" value="Ensembl"/>
</dbReference>
<dbReference type="GO" id="GO:0030120">
    <property type="term" value="C:vesicle coat"/>
    <property type="evidence" value="ECO:0000266"/>
    <property type="project" value="MGI"/>
</dbReference>
<dbReference type="GO" id="GO:0048306">
    <property type="term" value="F:calcium-dependent protein binding"/>
    <property type="evidence" value="ECO:0007669"/>
    <property type="project" value="Ensembl"/>
</dbReference>
<dbReference type="GO" id="GO:0090110">
    <property type="term" value="P:COPII-coated vesicle cargo loading"/>
    <property type="evidence" value="ECO:0007669"/>
    <property type="project" value="Ensembl"/>
</dbReference>
<dbReference type="GO" id="GO:0015031">
    <property type="term" value="P:protein transport"/>
    <property type="evidence" value="ECO:0007669"/>
    <property type="project" value="UniProtKB-KW"/>
</dbReference>
<dbReference type="GO" id="GO:0051592">
    <property type="term" value="P:response to calcium ion"/>
    <property type="evidence" value="ECO:0007669"/>
    <property type="project" value="Ensembl"/>
</dbReference>
<dbReference type="FunFam" id="1.20.940.10:FF:000001">
    <property type="entry name" value="Protein transport protein Sec31A isoform A"/>
    <property type="match status" value="1"/>
</dbReference>
<dbReference type="FunFam" id="2.130.10.10:FF:000009">
    <property type="entry name" value="Protein transport protein Sec31A isoform A"/>
    <property type="match status" value="1"/>
</dbReference>
<dbReference type="FunFam" id="1.25.40.1030:FF:000001">
    <property type="entry name" value="protein transport protein Sec31A isoform X3"/>
    <property type="match status" value="1"/>
</dbReference>
<dbReference type="Gene3D" id="1.25.40.1030">
    <property type="match status" value="1"/>
</dbReference>
<dbReference type="Gene3D" id="1.20.940.10">
    <property type="entry name" value="Functional domain of the splicing factor Prp18"/>
    <property type="match status" value="1"/>
</dbReference>
<dbReference type="Gene3D" id="2.130.10.10">
    <property type="entry name" value="YVTN repeat-like/Quinoprotein amine dehydrogenase"/>
    <property type="match status" value="1"/>
</dbReference>
<dbReference type="InterPro" id="IPR024298">
    <property type="entry name" value="Sec16_Sec23-bd"/>
</dbReference>
<dbReference type="InterPro" id="IPR040251">
    <property type="entry name" value="SEC31-like"/>
</dbReference>
<dbReference type="InterPro" id="IPR015943">
    <property type="entry name" value="WD40/YVTN_repeat-like_dom_sf"/>
</dbReference>
<dbReference type="InterPro" id="IPR036322">
    <property type="entry name" value="WD40_repeat_dom_sf"/>
</dbReference>
<dbReference type="InterPro" id="IPR001680">
    <property type="entry name" value="WD40_rpt"/>
</dbReference>
<dbReference type="PANTHER" id="PTHR13923:SF23">
    <property type="entry name" value="PROTEIN TRANSPORT PROTEIN SEC31A"/>
    <property type="match status" value="1"/>
</dbReference>
<dbReference type="PANTHER" id="PTHR13923">
    <property type="entry name" value="SEC31-RELATED PROTEIN"/>
    <property type="match status" value="1"/>
</dbReference>
<dbReference type="Pfam" id="PF12931">
    <property type="entry name" value="TPR_Sec16"/>
    <property type="match status" value="1"/>
</dbReference>
<dbReference type="SMART" id="SM00320">
    <property type="entry name" value="WD40"/>
    <property type="match status" value="6"/>
</dbReference>
<dbReference type="SUPFAM" id="SSF50978">
    <property type="entry name" value="WD40 repeat-like"/>
    <property type="match status" value="1"/>
</dbReference>
<dbReference type="PROSITE" id="PS50082">
    <property type="entry name" value="WD_REPEATS_2"/>
    <property type="match status" value="1"/>
</dbReference>
<dbReference type="PROSITE" id="PS50294">
    <property type="entry name" value="WD_REPEATS_REGION"/>
    <property type="match status" value="1"/>
</dbReference>
<comment type="function">
    <text evidence="2 3">Component of the coat protein complex II (COPII) which promotes the formation of transport vesicles from the endoplasmic reticulum (ER) (By similarity). The coat has two main functions, the physical deformation of the endoplasmic reticulum membrane into vesicles and the selection of cargo molecules (By similarity).</text>
</comment>
<comment type="subunit">
    <text evidence="1 2">COPII is composed of at least 5 proteins: the SEC23/24 complex, the SEC13/31 complex and SAR1. SEC13 and SEC31 make a 2:2 tetramer that forms the edge element of the COPII outer coat. The tetramer self-assembles in multiple copies to form the complete polyhedral cage. Interacts (via WD 8) with SEC13 (By similarity). Interacts with PDCD6; interaction takes place in response to cytosolic calcium increase and leads to bridge together the BCR(KLHL12) complex and SEC31A, leading to monoubiquitination. Interacts with KLHL12 (By similarity).</text>
</comment>
<comment type="subcellular location">
    <subcellularLocation>
        <location evidence="1">Cytoplasm</location>
    </subcellularLocation>
    <subcellularLocation>
        <location evidence="2">Cytoplasmic vesicle</location>
        <location evidence="2">COPII-coated vesicle membrane</location>
        <topology evidence="2">Peripheral membrane protein</topology>
        <orientation evidence="2">Cytoplasmic side</orientation>
    </subcellularLocation>
    <subcellularLocation>
        <location evidence="1">Endoplasmic reticulum membrane</location>
        <topology evidence="1">Peripheral membrane protein</topology>
    </subcellularLocation>
    <text evidence="3 6">Associates with membranes in a GTP-dependent manner (By similarity). Localizes to endoplasmic reticulum exit sites (ERES), also known as transitional endoplasmic reticulum (tER) (PubMed:25201882).</text>
</comment>
<comment type="alternative products">
    <event type="alternative splicing"/>
    <isoform>
        <id>Q3UPL0-1</id>
        <name>1</name>
        <sequence type="displayed"/>
    </isoform>
    <isoform>
        <id>Q3UPL0-2</id>
        <name>2</name>
        <sequence type="described" ref="VSP_026753"/>
    </isoform>
    <isoform>
        <id>Q3UPL0-3</id>
        <name>3</name>
        <sequence type="described" ref="VSP_026752"/>
    </isoform>
</comment>
<comment type="domain">
    <text evidence="2">The ALG-2-binding site motif-2 (ABS-2) contains a PXPGF sequence that binds hydrophobic pocket 3 of PDCD6.</text>
</comment>
<comment type="PTM">
    <text evidence="2">Monoubiquitinated by the BCR(KLHL12) E3 ubiquitin ligase complex, leading to regulate the size of COPII coats.</text>
</comment>
<comment type="similarity">
    <text evidence="8">Belongs to the WD repeat SEC31 family.</text>
</comment>